<protein>
    <recommendedName>
        <fullName>Interleukin-6</fullName>
        <shortName>IL-6</shortName>
    </recommendedName>
</protein>
<accession>Q865W7</accession>
<sequence>MNSLSTSAFSPVAFSLGLLLVMATAFPTPVPLGEDFKDGTTSNRPFTSPDKSEELIKYILGRISAMRKEMCEKYDKCENSKEALSENNLNLPKMTEKDGCFQSGFNQETCLMRITIGLLEFQIYLDYLQNYYEGDKGNTEAVQISTKALIQLLRQKVKQPEEVSTPNPITGSSLLNKLQTENQWMKNTKMILILRSLEDFLQFSLRAVRIM</sequence>
<comment type="function">
    <text evidence="2">Cytokine with a wide variety of biological functions in immunity, tissue regeneration, and metabolism. Binds to IL6R, then the complex associates to the signaling subunit IL6ST/gp130 to trigger the intracellular IL6-signaling pathway. The interaction with the membrane-bound IL6R and IL6ST stimulates 'classic signaling', whereas the binding of IL6 and soluble IL6R to IL6ST stimulates 'trans-signaling'. Alternatively, 'cluster signaling' occurs when membrane-bound IL6:IL6R complexes on transmitter cells activate IL6ST receptors on neighboring receiver cells.</text>
</comment>
<comment type="function">
    <text evidence="2 3">IL6 is a potent inducer of the acute phase response. Rapid production of IL6 contributes to host defense during infection and tissue injury, but excessive IL6 synthesis is involved in disease pathology. In the innate immune response, is synthesized by myeloid cells, such as macrophages and dendritic cells, upon recognition of pathogens through toll-like receptors (TLRs) at the site of infection or tissue injury (By similarity). In the adaptive immune response, is required for the differentiation of B cells into immunoglobulin-secreting cells. Plays a major role in the differentiation of CD4(+) T cell subsets. Essential factor for the development of T follicular helper (Tfh) cells that are required for the induction of germinal-center formation. Required to drive naive CD4(+) T cells to the Th17 lineage. Also required for proliferation of myeloma cells and the survival of plasmablast cells (By similarity).</text>
</comment>
<comment type="function">
    <text evidence="2 3">Acts as an essential factor in bone homeostasis and on vessels directly or indirectly by induction of VEGF, resulting in increased angiogenesis activity and vascular permeability. Induces, through 'trans-signaling' and synergistically with IL1B and TNF, the production of VEGF. Involved in metabolic controls, is discharged into the bloodstream after muscle contraction increasing lipolysis and improving insulin resistance (By similarity). 'Trans-signaling' in central nervous system also regulates energy and glucose homeostasis. Mediates, through GLP-1, crosstalk between insulin-sensitive tissues, intestinal L cells and pancreatic islets to adapt to changes in insulin demand (By similarity). Also acts as a myokine (By similarity). Plays a protective role during liver injury, being required for maintenance of tissue regeneration (By similarity). Also has a pivotal role in iron metabolism by regulating HAMP/hepcidin expression upon inflammation or bacterial infection (By similarity). Through activation of IL6ST-YAP-NOTCH pathway, induces inflammation-induced epithelial regeneration (By similarity).</text>
</comment>
<comment type="subunit">
    <text evidence="2">Component of a hexamer of two molecules each of IL6, IL6R and IL6ST; first binds to IL6R to associate with the signaling subunit IL6ST. Interacts with IL6R (via the N-terminal ectodomain); this interaction may be affected by IL6R-binding with SORL1, hence decreasing IL6 cis signaling. Interacts with SORL1 (via the N-terminal ectodomain); this interaction leads to IL6 internalization and lysosomal degradation. May form a trimeric complex with the soluble SORL1 ectodomain and soluble IL6R receptor; this interaction might stabilize circulating IL6, hence promoting IL6 trans signaling.</text>
</comment>
<comment type="subcellular location">
    <subcellularLocation>
        <location evidence="2">Secreted</location>
    </subcellularLocation>
</comment>
<comment type="similarity">
    <text evidence="4">Belongs to the IL-6 superfamily.</text>
</comment>
<proteinExistence type="evidence at transcript level"/>
<keyword id="KW-0011">Acute phase</keyword>
<keyword id="KW-0202">Cytokine</keyword>
<keyword id="KW-1015">Disulfide bond</keyword>
<keyword id="KW-0339">Growth factor</keyword>
<keyword id="KW-0597">Phosphoprotein</keyword>
<keyword id="KW-1185">Reference proteome</keyword>
<keyword id="KW-0964">Secreted</keyword>
<keyword id="KW-0732">Signal</keyword>
<dbReference type="EMBL" id="AB107656">
    <property type="protein sequence ID" value="BAC75393.1"/>
    <property type="molecule type" value="mRNA"/>
</dbReference>
<dbReference type="SMR" id="Q865W7"/>
<dbReference type="Proteomes" id="UP000694950">
    <property type="component" value="Unplaced"/>
</dbReference>
<dbReference type="GO" id="GO:0005615">
    <property type="term" value="C:extracellular space"/>
    <property type="evidence" value="ECO:0007669"/>
    <property type="project" value="UniProtKB-KW"/>
</dbReference>
<dbReference type="GO" id="GO:0005896">
    <property type="term" value="C:interleukin-6 receptor complex"/>
    <property type="evidence" value="ECO:0007669"/>
    <property type="project" value="TreeGrafter"/>
</dbReference>
<dbReference type="GO" id="GO:0005125">
    <property type="term" value="F:cytokine activity"/>
    <property type="evidence" value="ECO:0007669"/>
    <property type="project" value="UniProtKB-KW"/>
</dbReference>
<dbReference type="GO" id="GO:0008083">
    <property type="term" value="F:growth factor activity"/>
    <property type="evidence" value="ECO:0007669"/>
    <property type="project" value="UniProtKB-KW"/>
</dbReference>
<dbReference type="GO" id="GO:0005138">
    <property type="term" value="F:interleukin-6 receptor binding"/>
    <property type="evidence" value="ECO:0007669"/>
    <property type="project" value="InterPro"/>
</dbReference>
<dbReference type="GO" id="GO:0006953">
    <property type="term" value="P:acute-phase response"/>
    <property type="evidence" value="ECO:0007669"/>
    <property type="project" value="UniProtKB-KW"/>
</dbReference>
<dbReference type="GO" id="GO:0042593">
    <property type="term" value="P:glucose homeostasis"/>
    <property type="evidence" value="ECO:0000250"/>
    <property type="project" value="UniProtKB"/>
</dbReference>
<dbReference type="GO" id="GO:0072574">
    <property type="term" value="P:hepatocyte proliferation"/>
    <property type="evidence" value="ECO:0000250"/>
    <property type="project" value="UniProtKB"/>
</dbReference>
<dbReference type="GO" id="GO:0070102">
    <property type="term" value="P:interleukin-6-mediated signaling pathway"/>
    <property type="evidence" value="ECO:0000250"/>
    <property type="project" value="UniProtKB"/>
</dbReference>
<dbReference type="GO" id="GO:0097421">
    <property type="term" value="P:liver regeneration"/>
    <property type="evidence" value="ECO:0000250"/>
    <property type="project" value="UniProtKB"/>
</dbReference>
<dbReference type="GO" id="GO:0051240">
    <property type="term" value="P:positive regulation of multicellular organismal process"/>
    <property type="evidence" value="ECO:0007669"/>
    <property type="project" value="UniProtKB-ARBA"/>
</dbReference>
<dbReference type="GO" id="GO:0046427">
    <property type="term" value="P:positive regulation of receptor signaling pathway via JAK-STAT"/>
    <property type="evidence" value="ECO:0007669"/>
    <property type="project" value="TreeGrafter"/>
</dbReference>
<dbReference type="GO" id="GO:1904894">
    <property type="term" value="P:positive regulation of receptor signaling pathway via STAT"/>
    <property type="evidence" value="ECO:0000250"/>
    <property type="project" value="UniProtKB"/>
</dbReference>
<dbReference type="GO" id="GO:0070092">
    <property type="term" value="P:regulation of glucagon secretion"/>
    <property type="evidence" value="ECO:0000250"/>
    <property type="project" value="UniProtKB"/>
</dbReference>
<dbReference type="GO" id="GO:0050796">
    <property type="term" value="P:regulation of insulin secretion"/>
    <property type="evidence" value="ECO:0000250"/>
    <property type="project" value="UniProtKB"/>
</dbReference>
<dbReference type="GO" id="GO:0014823">
    <property type="term" value="P:response to activity"/>
    <property type="evidence" value="ECO:0000250"/>
    <property type="project" value="UniProtKB"/>
</dbReference>
<dbReference type="GO" id="GO:0072540">
    <property type="term" value="P:T-helper 17 cell lineage commitment"/>
    <property type="evidence" value="ECO:0000250"/>
    <property type="project" value="UniProtKB"/>
</dbReference>
<dbReference type="GO" id="GO:0010573">
    <property type="term" value="P:vascular endothelial growth factor production"/>
    <property type="evidence" value="ECO:0000250"/>
    <property type="project" value="UniProtKB"/>
</dbReference>
<dbReference type="FunFam" id="1.20.1250.10:FF:000006">
    <property type="entry name" value="Interleukin-6"/>
    <property type="match status" value="1"/>
</dbReference>
<dbReference type="Gene3D" id="1.20.1250.10">
    <property type="match status" value="1"/>
</dbReference>
<dbReference type="InterPro" id="IPR009079">
    <property type="entry name" value="4_helix_cytokine-like_core"/>
</dbReference>
<dbReference type="InterPro" id="IPR003574">
    <property type="entry name" value="IL-6-like"/>
</dbReference>
<dbReference type="InterPro" id="IPR030474">
    <property type="entry name" value="IL-6/GCSF/MGF"/>
</dbReference>
<dbReference type="InterPro" id="IPR030473">
    <property type="entry name" value="IL6/GCSF/MGF_CS"/>
</dbReference>
<dbReference type="PANTHER" id="PTHR48494">
    <property type="entry name" value="INTERLEUKIN-6"/>
    <property type="match status" value="1"/>
</dbReference>
<dbReference type="PANTHER" id="PTHR48494:SF1">
    <property type="entry name" value="INTERLEUKIN-6"/>
    <property type="match status" value="1"/>
</dbReference>
<dbReference type="Pfam" id="PF00489">
    <property type="entry name" value="IL6"/>
    <property type="match status" value="1"/>
</dbReference>
<dbReference type="PIRSF" id="PIRSF001935">
    <property type="entry name" value="IL6_MGF_GCSF"/>
    <property type="match status" value="1"/>
</dbReference>
<dbReference type="PRINTS" id="PR00433">
    <property type="entry name" value="IL6GCSFMGF"/>
</dbReference>
<dbReference type="PRINTS" id="PR00434">
    <property type="entry name" value="INTERLEUKIN6"/>
</dbReference>
<dbReference type="SMART" id="SM00126">
    <property type="entry name" value="IL6"/>
    <property type="match status" value="1"/>
</dbReference>
<dbReference type="SUPFAM" id="SSF47266">
    <property type="entry name" value="4-helical cytokines"/>
    <property type="match status" value="1"/>
</dbReference>
<dbReference type="PROSITE" id="PS00254">
    <property type="entry name" value="INTERLEUKIN_6"/>
    <property type="match status" value="1"/>
</dbReference>
<gene>
    <name type="primary">IL6</name>
</gene>
<feature type="signal peptide" evidence="1">
    <location>
        <begin position="1"/>
        <end position="29"/>
    </location>
</feature>
<feature type="chain" id="PRO_0000015575" description="Interleukin-6">
    <location>
        <begin position="30"/>
        <end position="211"/>
    </location>
</feature>
<feature type="modified residue" description="Phosphoserine" evidence="2">
    <location>
        <position position="80"/>
    </location>
</feature>
<feature type="disulfide bond" evidence="1">
    <location>
        <begin position="71"/>
        <end position="77"/>
    </location>
</feature>
<feature type="disulfide bond" evidence="1">
    <location>
        <begin position="100"/>
        <end position="110"/>
    </location>
</feature>
<reference key="1">
    <citation type="submission" date="2003-04" db="EMBL/GenBank/DDBJ databases">
        <title>Cloning and sequence analysis of cytokine cDNAs of llama and camel.</title>
        <authorList>
            <person name="Odbileg R."/>
            <person name="Lee S.-I."/>
            <person name="Yoshida R."/>
            <person name="Chang K.-S."/>
            <person name="Ohashi K."/>
            <person name="Sugimoto C."/>
            <person name="Onuma M."/>
        </authorList>
    </citation>
    <scope>NUCLEOTIDE SEQUENCE [MRNA]</scope>
</reference>
<evidence type="ECO:0000250" key="1"/>
<evidence type="ECO:0000250" key="2">
    <source>
        <dbReference type="UniProtKB" id="P05231"/>
    </source>
</evidence>
<evidence type="ECO:0000250" key="3">
    <source>
        <dbReference type="UniProtKB" id="P08505"/>
    </source>
</evidence>
<evidence type="ECO:0000305" key="4"/>
<name>IL6_CAMBA</name>
<organism>
    <name type="scientific">Camelus bactrianus</name>
    <name type="common">Bactrian camel</name>
    <dbReference type="NCBI Taxonomy" id="9837"/>
    <lineage>
        <taxon>Eukaryota</taxon>
        <taxon>Metazoa</taxon>
        <taxon>Chordata</taxon>
        <taxon>Craniata</taxon>
        <taxon>Vertebrata</taxon>
        <taxon>Euteleostomi</taxon>
        <taxon>Mammalia</taxon>
        <taxon>Eutheria</taxon>
        <taxon>Laurasiatheria</taxon>
        <taxon>Artiodactyla</taxon>
        <taxon>Tylopoda</taxon>
        <taxon>Camelidae</taxon>
        <taxon>Camelus</taxon>
    </lineage>
</organism>